<reference key="1">
    <citation type="journal article" date="1998" name="Nature">
        <title>Deciphering the biology of Mycobacterium tuberculosis from the complete genome sequence.</title>
        <authorList>
            <person name="Cole S.T."/>
            <person name="Brosch R."/>
            <person name="Parkhill J."/>
            <person name="Garnier T."/>
            <person name="Churcher C.M."/>
            <person name="Harris D.E."/>
            <person name="Gordon S.V."/>
            <person name="Eiglmeier K."/>
            <person name="Gas S."/>
            <person name="Barry C.E. III"/>
            <person name="Tekaia F."/>
            <person name="Badcock K."/>
            <person name="Basham D."/>
            <person name="Brown D."/>
            <person name="Chillingworth T."/>
            <person name="Connor R."/>
            <person name="Davies R.M."/>
            <person name="Devlin K."/>
            <person name="Feltwell T."/>
            <person name="Gentles S."/>
            <person name="Hamlin N."/>
            <person name="Holroyd S."/>
            <person name="Hornsby T."/>
            <person name="Jagels K."/>
            <person name="Krogh A."/>
            <person name="McLean J."/>
            <person name="Moule S."/>
            <person name="Murphy L.D."/>
            <person name="Oliver S."/>
            <person name="Osborne J."/>
            <person name="Quail M.A."/>
            <person name="Rajandream M.A."/>
            <person name="Rogers J."/>
            <person name="Rutter S."/>
            <person name="Seeger K."/>
            <person name="Skelton S."/>
            <person name="Squares S."/>
            <person name="Squares R."/>
            <person name="Sulston J.E."/>
            <person name="Taylor K."/>
            <person name="Whitehead S."/>
            <person name="Barrell B.G."/>
        </authorList>
    </citation>
    <scope>NUCLEOTIDE SEQUENCE [LARGE SCALE GENOMIC DNA]</scope>
    <source>
        <strain>ATCC 25618 / H37Rv</strain>
    </source>
</reference>
<reference key="2">
    <citation type="journal article" date="2005" name="J. Biol. Chem.">
        <title>p-Hydroxybenzoic acid synthesis in Mycobacterium tuberculosis.</title>
        <authorList>
            <person name="Stadthagen G."/>
            <person name="Kordulakova J."/>
            <person name="Griffin R."/>
            <person name="Constant P."/>
            <person name="Bottova I."/>
            <person name="Barilone N."/>
            <person name="Gicquel B."/>
            <person name="Daffe M."/>
            <person name="Jackson M."/>
        </authorList>
    </citation>
    <scope>FUNCTION</scope>
    <scope>CATALYTIC ACTIVITY</scope>
    <scope>BIOPHYSICOCHEMICAL PROPERTIES</scope>
    <scope>ACTIVITY REGULATION</scope>
    <source>
        <strain>Mt103</strain>
    </source>
</reference>
<reference key="3">
    <citation type="journal article" date="2008" name="BMC Syst. Biol.">
        <title>targetTB: a target identification pipeline for Mycobacterium tuberculosis through an interactome, reactome and genome-scale structural analysis.</title>
        <authorList>
            <person name="Raman K."/>
            <person name="Yeturu K."/>
            <person name="Chandra N."/>
        </authorList>
    </citation>
    <scope>IDENTIFICATION AS A DRUG TARGET [LARGE SCALE ANALYSIS]</scope>
</reference>
<reference key="4">
    <citation type="journal article" date="2011" name="Mol. Cell. Proteomics">
        <title>Proteogenomic analysis of Mycobacterium tuberculosis by high resolution mass spectrometry.</title>
        <authorList>
            <person name="Kelkar D.S."/>
            <person name="Kumar D."/>
            <person name="Kumar P."/>
            <person name="Balakrishnan L."/>
            <person name="Muthusamy B."/>
            <person name="Yadav A.K."/>
            <person name="Shrivastava P."/>
            <person name="Marimuthu A."/>
            <person name="Anand S."/>
            <person name="Sundaram H."/>
            <person name="Kingsbury R."/>
            <person name="Harsha H.C."/>
            <person name="Nair B."/>
            <person name="Prasad T.S."/>
            <person name="Chauhan D.S."/>
            <person name="Katoch K."/>
            <person name="Katoch V.M."/>
            <person name="Kumar P."/>
            <person name="Chaerkady R."/>
            <person name="Ramachandran S."/>
            <person name="Dash D."/>
            <person name="Pandey A."/>
        </authorList>
    </citation>
    <scope>IDENTIFICATION BY MASS SPECTROMETRY [LARGE SCALE ANALYSIS]</scope>
    <source>
        <strain>ATCC 25618 / H37Rv</strain>
    </source>
</reference>
<keyword id="KW-0456">Lyase</keyword>
<keyword id="KW-1185">Reference proteome</keyword>
<feature type="chain" id="PRO_0000240510" description="Chorismate pyruvate-lyase">
    <location>
        <begin position="1"/>
        <end position="199"/>
    </location>
</feature>
<sequence>MTECFLSDQEIRKLNRDLRILIAANGTLTRVLNIVADDEVIVQIVKQRIHDVSPKLSEFEQLGQVGVGRVLQRYIILKGRNSEHLFVAAESLIAIDRLPAAIITRLTQTNDPLGEVMAASHIETFKEEAKVWVGDLPGWLALHGYQNSRKRAVARRYRVISGGQPIMVVTEHFLRSVFRDAPHEEPDRWQFSNAITLAR</sequence>
<organism>
    <name type="scientific">Mycobacterium tuberculosis (strain ATCC 25618 / H37Rv)</name>
    <dbReference type="NCBI Taxonomy" id="83332"/>
    <lineage>
        <taxon>Bacteria</taxon>
        <taxon>Bacillati</taxon>
        <taxon>Actinomycetota</taxon>
        <taxon>Actinomycetes</taxon>
        <taxon>Mycobacteriales</taxon>
        <taxon>Mycobacteriaceae</taxon>
        <taxon>Mycobacterium</taxon>
        <taxon>Mycobacterium tuberculosis complex</taxon>
    </lineage>
</organism>
<gene>
    <name type="ordered locus">Rv2949c</name>
</gene>
<comment type="function">
    <text evidence="1">Removes the pyruvyl group from chorismate to provide 4-hydroxybenzoate (4HB). Involved in the synthesis of glycosylated p-hydroxybenzoic acid methyl esters (p-HBADs) and phenolic glycolipids (PGL) that play important roles in the pathogenesis of mycobacterial infections.</text>
</comment>
<comment type="catalytic activity">
    <reaction evidence="1">
        <text>chorismate = 4-hydroxybenzoate + pyruvate</text>
        <dbReference type="Rhea" id="RHEA:16505"/>
        <dbReference type="ChEBI" id="CHEBI:15361"/>
        <dbReference type="ChEBI" id="CHEBI:17879"/>
        <dbReference type="ChEBI" id="CHEBI:29748"/>
        <dbReference type="EC" id="4.1.3.40"/>
    </reaction>
</comment>
<comment type="activity regulation">
    <text evidence="1">Inhibited by 4-hydroxybenzoate, but not by pyruvate.</text>
</comment>
<comment type="biophysicochemical properties">
    <kinetics>
        <KM evidence="1">19.7 uM for chorismate</KM>
        <Vmax evidence="1">0.048 umol/min/mg enzyme toward chorismate</Vmax>
    </kinetics>
    <phDependence>
        <text evidence="1">Optimum pH is 7.5. Active from pH 6.8 to 10.</text>
    </phDependence>
</comment>
<comment type="miscellaneous">
    <text>Was identified as a high-confidence drug target.</text>
</comment>
<comment type="similarity">
    <text evidence="2">Belongs to the chorismate pyruvate-lyase type 2 family.</text>
</comment>
<proteinExistence type="evidence at protein level"/>
<dbReference type="EC" id="4.1.3.40"/>
<dbReference type="EMBL" id="AL123456">
    <property type="protein sequence ID" value="CCP45753.1"/>
    <property type="molecule type" value="Genomic_DNA"/>
</dbReference>
<dbReference type="PIR" id="B70669">
    <property type="entry name" value="B70669"/>
</dbReference>
<dbReference type="RefSeq" id="NP_217465.1">
    <property type="nucleotide sequence ID" value="NC_000962.3"/>
</dbReference>
<dbReference type="RefSeq" id="WP_003414887.1">
    <property type="nucleotide sequence ID" value="NZ_NVQJ01000015.1"/>
</dbReference>
<dbReference type="SMR" id="P9WIC5"/>
<dbReference type="FunCoup" id="P9WIC5">
    <property type="interactions" value="133"/>
</dbReference>
<dbReference type="STRING" id="83332.Rv2949c"/>
<dbReference type="PaxDb" id="83332-Rv2949c"/>
<dbReference type="DNASU" id="887206"/>
<dbReference type="GeneID" id="887206"/>
<dbReference type="KEGG" id="mtu:Rv2949c"/>
<dbReference type="KEGG" id="mtv:RVBD_2949c"/>
<dbReference type="TubercuList" id="Rv2949c"/>
<dbReference type="eggNOG" id="COG3161">
    <property type="taxonomic scope" value="Bacteria"/>
</dbReference>
<dbReference type="InParanoid" id="P9WIC5"/>
<dbReference type="OrthoDB" id="6297849at2"/>
<dbReference type="PhylomeDB" id="P9WIC5"/>
<dbReference type="Proteomes" id="UP000001584">
    <property type="component" value="Chromosome"/>
</dbReference>
<dbReference type="GO" id="GO:0008813">
    <property type="term" value="F:chorismate lyase activity"/>
    <property type="evidence" value="ECO:0000314"/>
    <property type="project" value="MTBBASE"/>
</dbReference>
<dbReference type="GO" id="GO:0046417">
    <property type="term" value="P:chorismate metabolic process"/>
    <property type="evidence" value="ECO:0000315"/>
    <property type="project" value="MTBBASE"/>
</dbReference>
<dbReference type="GO" id="GO:0071770">
    <property type="term" value="P:DIM/DIP cell wall layer assembly"/>
    <property type="evidence" value="ECO:0000315"/>
    <property type="project" value="MTBBASE"/>
</dbReference>
<dbReference type="GO" id="GO:0072330">
    <property type="term" value="P:monocarboxylic acid biosynthetic process"/>
    <property type="evidence" value="ECO:0000315"/>
    <property type="project" value="MTBBASE"/>
</dbReference>
<dbReference type="FunFam" id="3.40.1410.10:FF:000020">
    <property type="entry name" value="Chorismate pyruvate-lyase"/>
    <property type="match status" value="1"/>
</dbReference>
<dbReference type="Gene3D" id="3.40.1410.10">
    <property type="entry name" value="Chorismate lyase-like"/>
    <property type="match status" value="1"/>
</dbReference>
<dbReference type="InterPro" id="IPR028978">
    <property type="entry name" value="Chorismate_lyase_/UTRA_dom_sf"/>
</dbReference>
<dbReference type="InterPro" id="IPR002800">
    <property type="entry name" value="Rv2949c-like"/>
</dbReference>
<dbReference type="Pfam" id="PF01947">
    <property type="entry name" value="Rv2949c-like"/>
    <property type="match status" value="1"/>
</dbReference>
<dbReference type="SUPFAM" id="SSF64288">
    <property type="entry name" value="Chorismate lyase-like"/>
    <property type="match status" value="1"/>
</dbReference>
<name>PHBS_MYCTU</name>
<accession>P9WIC5</accession>
<accession>L0TDV5</accession>
<accession>O86325</accession>
<accession>Q7D6D8</accession>
<protein>
    <recommendedName>
        <fullName>Chorismate pyruvate-lyase</fullName>
        <ecNumber>4.1.3.40</ecNumber>
    </recommendedName>
    <alternativeName>
        <fullName>4-HB synthase</fullName>
    </alternativeName>
    <alternativeName>
        <fullName>p-hydroxybenzoic acid synthase</fullName>
    </alternativeName>
</protein>
<evidence type="ECO:0000269" key="1">
    <source>
    </source>
</evidence>
<evidence type="ECO:0000305" key="2"/>